<proteinExistence type="inferred from homology"/>
<gene>
    <name evidence="1" type="primary">katG</name>
    <name type="ordered locus">RER_12250</name>
</gene>
<feature type="chain" id="PRO_1000216226" description="Catalase-peroxidase">
    <location>
        <begin position="1"/>
        <end position="740"/>
    </location>
</feature>
<feature type="region of interest" description="Disordered" evidence="2">
    <location>
        <begin position="1"/>
        <end position="44"/>
    </location>
</feature>
<feature type="active site" description="Proton acceptor" evidence="1">
    <location>
        <position position="110"/>
    </location>
</feature>
<feature type="binding site" description="axial binding residue" evidence="1">
    <location>
        <position position="272"/>
    </location>
    <ligand>
        <name>heme b</name>
        <dbReference type="ChEBI" id="CHEBI:60344"/>
    </ligand>
    <ligandPart>
        <name>Fe</name>
        <dbReference type="ChEBI" id="CHEBI:18248"/>
    </ligandPart>
</feature>
<feature type="site" description="Transition state stabilizer" evidence="1">
    <location>
        <position position="106"/>
    </location>
</feature>
<feature type="cross-link" description="Tryptophyl-tyrosyl-methioninium (Trp-Tyr) (with M-257)" evidence="1">
    <location>
        <begin position="109"/>
        <end position="231"/>
    </location>
</feature>
<feature type="cross-link" description="Tryptophyl-tyrosyl-methioninium (Tyr-Met) (with W-109)" evidence="1">
    <location>
        <begin position="231"/>
        <end position="257"/>
    </location>
</feature>
<protein>
    <recommendedName>
        <fullName evidence="1">Catalase-peroxidase</fullName>
        <shortName evidence="1">CP</shortName>
        <ecNumber evidence="1">1.11.1.21</ecNumber>
    </recommendedName>
    <alternativeName>
        <fullName evidence="1">Peroxidase/catalase</fullName>
    </alternativeName>
</protein>
<accession>C0ZSW0</accession>
<name>KATG_RHOE4</name>
<organism>
    <name type="scientific">Rhodococcus erythropolis (strain PR4 / NBRC 100887)</name>
    <dbReference type="NCBI Taxonomy" id="234621"/>
    <lineage>
        <taxon>Bacteria</taxon>
        <taxon>Bacillati</taxon>
        <taxon>Actinomycetota</taxon>
        <taxon>Actinomycetes</taxon>
        <taxon>Mycobacteriales</taxon>
        <taxon>Nocardiaceae</taxon>
        <taxon>Rhodococcus</taxon>
        <taxon>Rhodococcus erythropolis group</taxon>
    </lineage>
</organism>
<dbReference type="EC" id="1.11.1.21" evidence="1"/>
<dbReference type="EMBL" id="AP008957">
    <property type="protein sequence ID" value="BAH31933.1"/>
    <property type="molecule type" value="Genomic_DNA"/>
</dbReference>
<dbReference type="RefSeq" id="WP_020906506.1">
    <property type="nucleotide sequence ID" value="NC_012490.1"/>
</dbReference>
<dbReference type="SMR" id="C0ZSW0"/>
<dbReference type="KEGG" id="rer:RER_12250"/>
<dbReference type="PATRIC" id="fig|234621.6.peg.1689"/>
<dbReference type="eggNOG" id="COG0376">
    <property type="taxonomic scope" value="Bacteria"/>
</dbReference>
<dbReference type="HOGENOM" id="CLU_025424_2_0_11"/>
<dbReference type="Proteomes" id="UP000002204">
    <property type="component" value="Chromosome"/>
</dbReference>
<dbReference type="GO" id="GO:0005829">
    <property type="term" value="C:cytosol"/>
    <property type="evidence" value="ECO:0007669"/>
    <property type="project" value="TreeGrafter"/>
</dbReference>
<dbReference type="GO" id="GO:0004096">
    <property type="term" value="F:catalase activity"/>
    <property type="evidence" value="ECO:0007669"/>
    <property type="project" value="UniProtKB-UniRule"/>
</dbReference>
<dbReference type="GO" id="GO:0020037">
    <property type="term" value="F:heme binding"/>
    <property type="evidence" value="ECO:0007669"/>
    <property type="project" value="InterPro"/>
</dbReference>
<dbReference type="GO" id="GO:0046872">
    <property type="term" value="F:metal ion binding"/>
    <property type="evidence" value="ECO:0007669"/>
    <property type="project" value="UniProtKB-KW"/>
</dbReference>
<dbReference type="GO" id="GO:0070301">
    <property type="term" value="P:cellular response to hydrogen peroxide"/>
    <property type="evidence" value="ECO:0007669"/>
    <property type="project" value="TreeGrafter"/>
</dbReference>
<dbReference type="GO" id="GO:0042744">
    <property type="term" value="P:hydrogen peroxide catabolic process"/>
    <property type="evidence" value="ECO:0007669"/>
    <property type="project" value="UniProtKB-KW"/>
</dbReference>
<dbReference type="CDD" id="cd00649">
    <property type="entry name" value="catalase_peroxidase_1"/>
    <property type="match status" value="1"/>
</dbReference>
<dbReference type="CDD" id="cd08200">
    <property type="entry name" value="catalase_peroxidase_2"/>
    <property type="match status" value="1"/>
</dbReference>
<dbReference type="FunFam" id="1.10.420.10:FF:000002">
    <property type="entry name" value="Catalase-peroxidase"/>
    <property type="match status" value="1"/>
</dbReference>
<dbReference type="FunFam" id="1.10.420.10:FF:000004">
    <property type="entry name" value="Catalase-peroxidase"/>
    <property type="match status" value="1"/>
</dbReference>
<dbReference type="FunFam" id="1.10.520.10:FF:000002">
    <property type="entry name" value="Catalase-peroxidase"/>
    <property type="match status" value="1"/>
</dbReference>
<dbReference type="Gene3D" id="1.10.520.10">
    <property type="match status" value="2"/>
</dbReference>
<dbReference type="Gene3D" id="1.10.420.10">
    <property type="entry name" value="Peroxidase, domain 2"/>
    <property type="match status" value="2"/>
</dbReference>
<dbReference type="HAMAP" id="MF_01961">
    <property type="entry name" value="Catal_peroxid"/>
    <property type="match status" value="1"/>
</dbReference>
<dbReference type="InterPro" id="IPR000763">
    <property type="entry name" value="Catalase_peroxidase"/>
</dbReference>
<dbReference type="InterPro" id="IPR002016">
    <property type="entry name" value="Haem_peroxidase"/>
</dbReference>
<dbReference type="InterPro" id="IPR010255">
    <property type="entry name" value="Haem_peroxidase_sf"/>
</dbReference>
<dbReference type="InterPro" id="IPR019794">
    <property type="entry name" value="Peroxidases_AS"/>
</dbReference>
<dbReference type="InterPro" id="IPR019793">
    <property type="entry name" value="Peroxidases_heam-ligand_BS"/>
</dbReference>
<dbReference type="NCBIfam" id="TIGR00198">
    <property type="entry name" value="cat_per_HPI"/>
    <property type="match status" value="1"/>
</dbReference>
<dbReference type="NCBIfam" id="NF011635">
    <property type="entry name" value="PRK15061.1"/>
    <property type="match status" value="1"/>
</dbReference>
<dbReference type="PANTHER" id="PTHR30555:SF0">
    <property type="entry name" value="CATALASE-PEROXIDASE"/>
    <property type="match status" value="1"/>
</dbReference>
<dbReference type="PANTHER" id="PTHR30555">
    <property type="entry name" value="HYDROPEROXIDASE I, BIFUNCTIONAL CATALASE-PEROXIDASE"/>
    <property type="match status" value="1"/>
</dbReference>
<dbReference type="Pfam" id="PF00141">
    <property type="entry name" value="peroxidase"/>
    <property type="match status" value="2"/>
</dbReference>
<dbReference type="PRINTS" id="PR00460">
    <property type="entry name" value="BPEROXIDASE"/>
</dbReference>
<dbReference type="PRINTS" id="PR00458">
    <property type="entry name" value="PEROXIDASE"/>
</dbReference>
<dbReference type="SUPFAM" id="SSF48113">
    <property type="entry name" value="Heme-dependent peroxidases"/>
    <property type="match status" value="2"/>
</dbReference>
<dbReference type="PROSITE" id="PS00435">
    <property type="entry name" value="PEROXIDASE_1"/>
    <property type="match status" value="1"/>
</dbReference>
<dbReference type="PROSITE" id="PS00436">
    <property type="entry name" value="PEROXIDASE_2"/>
    <property type="match status" value="1"/>
</dbReference>
<dbReference type="PROSITE" id="PS50873">
    <property type="entry name" value="PEROXIDASE_4"/>
    <property type="match status" value="1"/>
</dbReference>
<reference key="1">
    <citation type="submission" date="2005-03" db="EMBL/GenBank/DDBJ databases">
        <title>Comparison of the complete genome sequences of Rhodococcus erythropolis PR4 and Rhodococcus opacus B4.</title>
        <authorList>
            <person name="Takarada H."/>
            <person name="Sekine M."/>
            <person name="Hosoyama A."/>
            <person name="Yamada R."/>
            <person name="Fujisawa T."/>
            <person name="Omata S."/>
            <person name="Shimizu A."/>
            <person name="Tsukatani N."/>
            <person name="Tanikawa S."/>
            <person name="Fujita N."/>
            <person name="Harayama S."/>
        </authorList>
    </citation>
    <scope>NUCLEOTIDE SEQUENCE [LARGE SCALE GENOMIC DNA]</scope>
    <source>
        <strain>PR4 / NBRC 100887</strain>
    </source>
</reference>
<comment type="function">
    <text evidence="1">Bifunctional enzyme with both catalase and broad-spectrum peroxidase activity.</text>
</comment>
<comment type="catalytic activity">
    <reaction evidence="1">
        <text>H2O2 + AH2 = A + 2 H2O</text>
        <dbReference type="Rhea" id="RHEA:30275"/>
        <dbReference type="ChEBI" id="CHEBI:13193"/>
        <dbReference type="ChEBI" id="CHEBI:15377"/>
        <dbReference type="ChEBI" id="CHEBI:16240"/>
        <dbReference type="ChEBI" id="CHEBI:17499"/>
        <dbReference type="EC" id="1.11.1.21"/>
    </reaction>
</comment>
<comment type="catalytic activity">
    <reaction evidence="1">
        <text>2 H2O2 = O2 + 2 H2O</text>
        <dbReference type="Rhea" id="RHEA:20309"/>
        <dbReference type="ChEBI" id="CHEBI:15377"/>
        <dbReference type="ChEBI" id="CHEBI:15379"/>
        <dbReference type="ChEBI" id="CHEBI:16240"/>
        <dbReference type="EC" id="1.11.1.21"/>
    </reaction>
</comment>
<comment type="cofactor">
    <cofactor evidence="1">
        <name>heme b</name>
        <dbReference type="ChEBI" id="CHEBI:60344"/>
    </cofactor>
    <text evidence="1">Binds 1 heme b (iron(II)-protoporphyrin IX) group per dimer.</text>
</comment>
<comment type="subunit">
    <text evidence="1">Homodimer or homotetramer.</text>
</comment>
<comment type="PTM">
    <text evidence="1">Formation of the three residue Trp-Tyr-Met cross-link is important for the catalase, but not the peroxidase activity of the enzyme.</text>
</comment>
<comment type="similarity">
    <text evidence="1">Belongs to the peroxidase family. Peroxidase/catalase subfamily.</text>
</comment>
<keyword id="KW-0349">Heme</keyword>
<keyword id="KW-0376">Hydrogen peroxide</keyword>
<keyword id="KW-0408">Iron</keyword>
<keyword id="KW-0479">Metal-binding</keyword>
<keyword id="KW-0560">Oxidoreductase</keyword>
<keyword id="KW-0575">Peroxidase</keyword>
<evidence type="ECO:0000255" key="1">
    <source>
        <dbReference type="HAMAP-Rule" id="MF_01961"/>
    </source>
</evidence>
<evidence type="ECO:0000256" key="2">
    <source>
        <dbReference type="SAM" id="MobiDB-lite"/>
    </source>
</evidence>
<sequence>MSDSCPVAHDGNTASTSESENPAIPSPTPTGNRPRTNRDWWPNQPDLSVLHAHSSKSNPMGADFDYAQEFAKLDVEALKRDVIALMTASQDWWPADYGHYGGLFVRMSWHAAGTYRIADGRGGGGQGAQRFAPLNSWPDNASLDKARRLLWPVKQKYGKQVSWADLLVFAGNCALESMGFTTFGFGFGREDIWEPEEIYWGPEDTWLGDERYSGDRELSGPLGAVQMGLIYVNPEGPNGQPDPVAAARDIRETFARMAMNDVETAALIAGGHTFGKTHGAGPADLVGPEPEGAPVEQQGLGWKSAFGTGVGKDAITSGLEVVWTPTPTKWDNTFLEILYGYDWELTKSPAGAWQWIPKDGAGAGTIPDPFDSSAGRTPTMLTTDLSLRLDPTYEKITRRWLDHPEEFAEEFAKAWYKLLHRDMGPVTRYLGPWVPEPQLWQDPVPSADDQLIGDADIAILKSRLLDSGLSVSQLVSTAWASAASFRSTDMRGGANGARIRLEPQKNWEVNEPATLSAVLQTLERVQQEFNQAGGAKVSLADLIVLGGTAAVEQAAKNAGQDITVSFTPGRTDATQEQTDVDSFEVLEPRADGFRNYLKGGEKIPAEILLVDRAYMLSLTPPEVTVLVGGLRALNANFGKTGHGVFTDRPETLTNDFFVNLLDMGTEWKPSKTEENVYDGVDRATGDPKYTATAVDLVFGSNSQLRALSEVYASEDAKQKFAEDFAAAWTKVMDLDRFDVN</sequence>